<keyword id="KW-0046">Antibiotic resistance</keyword>
<keyword id="KW-0903">Direct protein sequencing</keyword>
<keyword id="KW-0378">Hydrolase</keyword>
<keyword id="KW-0732">Signal</keyword>
<reference key="1">
    <citation type="journal article" date="1988" name="FEMS Microbiol. Lett.">
        <title>Nucleotide sequence of the gene encoding the active-site serine beta-lactamase from Streptomyces cacaoi.</title>
        <authorList>
            <person name="Lenzini M.V."/>
            <person name="Ishihara H."/>
            <person name="Dusart J."/>
            <person name="Ogawara H."/>
            <person name="Joris B."/>
            <person name="Beeumen J."/>
            <person name="Frere J.-M."/>
            <person name="Ghuysen J.-M."/>
        </authorList>
    </citation>
    <scope>NUCLEOTIDE SEQUENCE [GENOMIC DNA]</scope>
    <source>
        <strain>ATCC 3082 / DSM 40057 / JCM 4352 / BCRC 12103 / KCC S-0352 / LMG 19320 / NBRC 12748 / NCIMB 9626 / IMRU 3082</strain>
    </source>
</reference>
<reference key="2">
    <citation type="journal article" date="1990" name="J. Bacteriol.">
        <title>Beta-lactamase expression in Streptomyces cacaoi.</title>
        <authorList>
            <person name="Urabe H."/>
            <person name="Lenzini M.V."/>
            <person name="Mukaide M."/>
            <person name="Dusart J."/>
            <person name="Nakano M.M."/>
            <person name="Ghuysen J.-M."/>
            <person name="Ogawara H."/>
        </authorList>
    </citation>
    <scope>NUCLEOTIDE SEQUENCE [GENOMIC DNA]</scope>
    <scope>SEQUENCE REVISION</scope>
    <source>
        <strain>ATCC 3082 / DSM 40057 / JCM 4352 / BCRC 12103 / KCC S-0352 / LMG 19320 / NBRC 12748 / NCIMB 9626 / IMRU 3082</strain>
    </source>
</reference>
<reference key="3">
    <citation type="journal article" date="1987" name="Biochem. J.">
        <title>The active sites of the beta-lactamases of Streptomyces cacaoi and Streptomyces albus G.</title>
        <authorList>
            <person name="de Meester F."/>
            <person name="Joris B."/>
            <person name="Lenzini M.V."/>
            <person name="Dehottay P."/>
            <person name="Erpicium T."/>
            <person name="Dusart J."/>
            <person name="Klein D."/>
            <person name="Ghuysen J.-M."/>
            <person name="Frere J.-M."/>
            <person name="van Beeumen J."/>
        </authorList>
    </citation>
    <scope>PROTEIN SEQUENCE OF 89-96</scope>
    <scope>ACTIVE SITE SER-93</scope>
</reference>
<reference key="4">
    <citation type="journal article" date="1991" name="Biochem. J.">
        <title>A standard numbering scheme for the class A beta-lactamases.</title>
        <authorList>
            <person name="Ambler R.P."/>
            <person name="Coulson A.F."/>
            <person name="Frere J.M."/>
            <person name="Ghuysen J.M."/>
            <person name="Joris B."/>
            <person name="Forsman M."/>
            <person name="Levesque R.C."/>
            <person name="Tiraby G."/>
            <person name="Waley S.G."/>
        </authorList>
    </citation>
    <scope>AMINO ACID NUMBERING SCHEME</scope>
</reference>
<reference key="5">
    <citation type="journal article" date="1992" name="FEMS Microbiol. Lett.">
        <title>Two different beta-lactamase genes are present in Streptomyces cacaoi.</title>
        <authorList>
            <person name="Magdalena J."/>
            <person name="Forsman M."/>
            <person name="Lenzini M.V."/>
            <person name="Brans A."/>
            <person name="Dusart J."/>
        </authorList>
    </citation>
    <scope>COMPARISON OF BLAU AND BLAL</scope>
</reference>
<gene>
    <name type="primary">blaL</name>
</gene>
<name>BLA1_STRCI</name>
<accession>Q03680</accession>
<dbReference type="EC" id="3.5.2.6"/>
<dbReference type="EMBL" id="D90201">
    <property type="protein sequence ID" value="BAA14224.1"/>
    <property type="molecule type" value="Genomic_DNA"/>
</dbReference>
<dbReference type="PIR" id="A37148">
    <property type="entry name" value="A37148"/>
</dbReference>
<dbReference type="RefSeq" id="WP_065102178.1">
    <property type="nucleotide sequence ID" value="NG_050939.1"/>
</dbReference>
<dbReference type="SMR" id="Q03680"/>
<dbReference type="GO" id="GO:0008800">
    <property type="term" value="F:beta-lactamase activity"/>
    <property type="evidence" value="ECO:0007669"/>
    <property type="project" value="UniProtKB-EC"/>
</dbReference>
<dbReference type="GO" id="GO:0030655">
    <property type="term" value="P:beta-lactam antibiotic catabolic process"/>
    <property type="evidence" value="ECO:0007669"/>
    <property type="project" value="InterPro"/>
</dbReference>
<dbReference type="GO" id="GO:0046677">
    <property type="term" value="P:response to antibiotic"/>
    <property type="evidence" value="ECO:0007669"/>
    <property type="project" value="UniProtKB-KW"/>
</dbReference>
<dbReference type="Gene3D" id="3.40.710.10">
    <property type="entry name" value="DD-peptidase/beta-lactamase superfamily"/>
    <property type="match status" value="1"/>
</dbReference>
<dbReference type="InterPro" id="IPR012338">
    <property type="entry name" value="Beta-lactam/transpept-like"/>
</dbReference>
<dbReference type="InterPro" id="IPR045155">
    <property type="entry name" value="Beta-lactam_cat"/>
</dbReference>
<dbReference type="InterPro" id="IPR000871">
    <property type="entry name" value="Beta-lactam_class-A"/>
</dbReference>
<dbReference type="InterPro" id="IPR023650">
    <property type="entry name" value="Beta-lactam_class-A_AS"/>
</dbReference>
<dbReference type="NCBIfam" id="NF033103">
    <property type="entry name" value="bla_class_A"/>
    <property type="match status" value="1"/>
</dbReference>
<dbReference type="NCBIfam" id="NF033101">
    <property type="entry name" value="blaL"/>
    <property type="match status" value="1"/>
</dbReference>
<dbReference type="PANTHER" id="PTHR35333">
    <property type="entry name" value="BETA-LACTAMASE"/>
    <property type="match status" value="1"/>
</dbReference>
<dbReference type="PANTHER" id="PTHR35333:SF3">
    <property type="entry name" value="BETA-LACTAMASE-TYPE TRANSPEPTIDASE FOLD CONTAINING PROTEIN"/>
    <property type="match status" value="1"/>
</dbReference>
<dbReference type="Pfam" id="PF13354">
    <property type="entry name" value="Beta-lactamase2"/>
    <property type="match status" value="1"/>
</dbReference>
<dbReference type="PRINTS" id="PR00118">
    <property type="entry name" value="BLACTAMASEA"/>
</dbReference>
<dbReference type="SUPFAM" id="SSF56601">
    <property type="entry name" value="beta-lactamase/transpeptidase-like"/>
    <property type="match status" value="1"/>
</dbReference>
<dbReference type="PROSITE" id="PS00146">
    <property type="entry name" value="BETA_LACTAMASE_A"/>
    <property type="match status" value="1"/>
</dbReference>
<organism>
    <name type="scientific">Streptomyces cacaoi</name>
    <dbReference type="NCBI Taxonomy" id="1898"/>
    <lineage>
        <taxon>Bacteria</taxon>
        <taxon>Bacillati</taxon>
        <taxon>Actinomycetota</taxon>
        <taxon>Actinomycetes</taxon>
        <taxon>Kitasatosporales</taxon>
        <taxon>Streptomycetaceae</taxon>
        <taxon>Streptomyces</taxon>
    </lineage>
</organism>
<feature type="signal peptide" evidence="2">
    <location>
        <begin position="1"/>
        <end position="26"/>
    </location>
</feature>
<feature type="chain" id="PRO_0000017016" description="Beta-lactamase 1">
    <location>
        <begin position="27"/>
        <end position="325"/>
    </location>
</feature>
<feature type="region of interest" description="Disordered" evidence="4">
    <location>
        <begin position="30"/>
        <end position="50"/>
    </location>
</feature>
<feature type="active site" description="Acyl-ester intermediate" evidence="3 5">
    <location>
        <position position="93"/>
    </location>
</feature>
<feature type="binding site" evidence="1">
    <location>
        <begin position="270"/>
        <end position="272"/>
    </location>
    <ligand>
        <name>substrate</name>
    </ligand>
</feature>
<evidence type="ECO:0000250" key="1"/>
<evidence type="ECO:0000255" key="2"/>
<evidence type="ECO:0000255" key="3">
    <source>
        <dbReference type="PROSITE-ProRule" id="PRU10101"/>
    </source>
</evidence>
<evidence type="ECO:0000256" key="4">
    <source>
        <dbReference type="SAM" id="MobiDB-lite"/>
    </source>
</evidence>
<evidence type="ECO:0000269" key="5">
    <source>
    </source>
</evidence>
<evidence type="ECO:0000305" key="6"/>
<evidence type="ECO:0000305" key="7">
    <source>
    </source>
</evidence>
<protein>
    <recommendedName>
        <fullName>Beta-lactamase 1</fullName>
        <ecNumber>3.5.2.6</ecNumber>
    </recommendedName>
    <alternativeName>
        <fullName>Penicillinase</fullName>
    </alternativeName>
</protein>
<proteinExistence type="evidence at protein level"/>
<comment type="catalytic activity">
    <reaction evidence="3">
        <text>a beta-lactam + H2O = a substituted beta-amino acid</text>
        <dbReference type="Rhea" id="RHEA:20401"/>
        <dbReference type="ChEBI" id="CHEBI:15377"/>
        <dbReference type="ChEBI" id="CHEBI:35627"/>
        <dbReference type="ChEBI" id="CHEBI:140347"/>
        <dbReference type="EC" id="3.5.2.6"/>
    </reaction>
</comment>
<comment type="miscellaneous">
    <text evidence="7">The class A beta-lactamase family has a specific amino-acid numbering system, sometimes called Ambler or ABL numbering and often misspelt as Amber. A multiple sequence alignment was used to derive a consensus sequence and then the consensus was numbered taking into account insertions and deletions. This allows use of identical numbers, e.g. for active site residues, despite differences in protein length. UniProt always uses natural numbering of residues, hence there appear to be differences in numbering between this entry and some papers.</text>
</comment>
<comment type="similarity">
    <text evidence="6">Belongs to the class-A beta-lactamase family.</text>
</comment>
<sequence>MRIRPTRRLLLGAVAPLALVPLVACGQASGSESGQQPGLGGCGTSAHGSADAHEKEFRALEKKFDAHPGVYAIDTRDGQEITHRADERFAYGSTFKALQAGAILAQVLRDGREVRRGAEADGMDKVVHYGQDAILPNSPVTEKHVADGMSLRELCDAVVAYSDNTAANLLFDQLGGRRGSTRVLKQLGDHTTSMDRYEQELGSAVPGDPRDTSTPRAFAEDLRAFAVEDGEKAALAPNDREQLNDWMSGSRTGDALIRAGVPKDWKVEDKSGQVKYGTRNDIAVVRPPGRAPIVVSVMSHGDTQDAEPHDELVAEAGLVVADGLK</sequence>